<reference key="1">
    <citation type="journal article" date="2005" name="Nature">
        <title>The genome of the social amoeba Dictyostelium discoideum.</title>
        <authorList>
            <person name="Eichinger L."/>
            <person name="Pachebat J.A."/>
            <person name="Gloeckner G."/>
            <person name="Rajandream M.A."/>
            <person name="Sucgang R."/>
            <person name="Berriman M."/>
            <person name="Song J."/>
            <person name="Olsen R."/>
            <person name="Szafranski K."/>
            <person name="Xu Q."/>
            <person name="Tunggal B."/>
            <person name="Kummerfeld S."/>
            <person name="Madera M."/>
            <person name="Konfortov B.A."/>
            <person name="Rivero F."/>
            <person name="Bankier A.T."/>
            <person name="Lehmann R."/>
            <person name="Hamlin N."/>
            <person name="Davies R."/>
            <person name="Gaudet P."/>
            <person name="Fey P."/>
            <person name="Pilcher K."/>
            <person name="Chen G."/>
            <person name="Saunders D."/>
            <person name="Sodergren E.J."/>
            <person name="Davis P."/>
            <person name="Kerhornou A."/>
            <person name="Nie X."/>
            <person name="Hall N."/>
            <person name="Anjard C."/>
            <person name="Hemphill L."/>
            <person name="Bason N."/>
            <person name="Farbrother P."/>
            <person name="Desany B."/>
            <person name="Just E."/>
            <person name="Morio T."/>
            <person name="Rost R."/>
            <person name="Churcher C.M."/>
            <person name="Cooper J."/>
            <person name="Haydock S."/>
            <person name="van Driessche N."/>
            <person name="Cronin A."/>
            <person name="Goodhead I."/>
            <person name="Muzny D.M."/>
            <person name="Mourier T."/>
            <person name="Pain A."/>
            <person name="Lu M."/>
            <person name="Harper D."/>
            <person name="Lindsay R."/>
            <person name="Hauser H."/>
            <person name="James K.D."/>
            <person name="Quiles M."/>
            <person name="Madan Babu M."/>
            <person name="Saito T."/>
            <person name="Buchrieser C."/>
            <person name="Wardroper A."/>
            <person name="Felder M."/>
            <person name="Thangavelu M."/>
            <person name="Johnson D."/>
            <person name="Knights A."/>
            <person name="Loulseged H."/>
            <person name="Mungall K.L."/>
            <person name="Oliver K."/>
            <person name="Price C."/>
            <person name="Quail M.A."/>
            <person name="Urushihara H."/>
            <person name="Hernandez J."/>
            <person name="Rabbinowitsch E."/>
            <person name="Steffen D."/>
            <person name="Sanders M."/>
            <person name="Ma J."/>
            <person name="Kohara Y."/>
            <person name="Sharp S."/>
            <person name="Simmonds M.N."/>
            <person name="Spiegler S."/>
            <person name="Tivey A."/>
            <person name="Sugano S."/>
            <person name="White B."/>
            <person name="Walker D."/>
            <person name="Woodward J.R."/>
            <person name="Winckler T."/>
            <person name="Tanaka Y."/>
            <person name="Shaulsky G."/>
            <person name="Schleicher M."/>
            <person name="Weinstock G.M."/>
            <person name="Rosenthal A."/>
            <person name="Cox E.C."/>
            <person name="Chisholm R.L."/>
            <person name="Gibbs R.A."/>
            <person name="Loomis W.F."/>
            <person name="Platzer M."/>
            <person name="Kay R.R."/>
            <person name="Williams J.G."/>
            <person name="Dear P.H."/>
            <person name="Noegel A.A."/>
            <person name="Barrell B.G."/>
            <person name="Kuspa A."/>
        </authorList>
    </citation>
    <scope>NUCLEOTIDE SEQUENCE [LARGE SCALE GENOMIC DNA]</scope>
    <source>
        <strain>AX4</strain>
    </source>
</reference>
<feature type="signal peptide" evidence="1">
    <location>
        <begin position="1"/>
        <end position="25"/>
    </location>
</feature>
<feature type="chain" id="PRO_0000351241" description="Uncharacterized transmembrane protein DDB_G0282061">
    <location>
        <begin position="26"/>
        <end position="301"/>
    </location>
</feature>
<feature type="topological domain" description="Extracellular" evidence="1">
    <location>
        <begin position="26"/>
        <end position="279"/>
    </location>
</feature>
<feature type="transmembrane region" description="Helical" evidence="1">
    <location>
        <begin position="280"/>
        <end position="300"/>
    </location>
</feature>
<feature type="topological domain" description="Cytoplasmic" evidence="1">
    <location>
        <position position="301"/>
    </location>
</feature>
<feature type="region of interest" description="Disordered" evidence="2">
    <location>
        <begin position="174"/>
        <end position="281"/>
    </location>
</feature>
<feature type="compositionally biased region" description="Low complexity" evidence="2">
    <location>
        <begin position="204"/>
        <end position="234"/>
    </location>
</feature>
<feature type="compositionally biased region" description="Low complexity" evidence="2">
    <location>
        <begin position="254"/>
        <end position="281"/>
    </location>
</feature>
<feature type="glycosylation site" description="N-linked (GlcNAc...) asparagine" evidence="1">
    <location>
        <position position="191"/>
    </location>
</feature>
<feature type="glycosylation site" description="N-linked (GlcNAc...) asparagine" evidence="1">
    <location>
        <position position="212"/>
    </location>
</feature>
<feature type="glycosylation site" description="N-linked (GlcNAc...) asparagine" evidence="1">
    <location>
        <position position="234"/>
    </location>
</feature>
<feature type="glycosylation site" description="N-linked (GlcNAc...) asparagine" evidence="1">
    <location>
        <position position="241"/>
    </location>
</feature>
<organism>
    <name type="scientific">Dictyostelium discoideum</name>
    <name type="common">Social amoeba</name>
    <dbReference type="NCBI Taxonomy" id="44689"/>
    <lineage>
        <taxon>Eukaryota</taxon>
        <taxon>Amoebozoa</taxon>
        <taxon>Evosea</taxon>
        <taxon>Eumycetozoa</taxon>
        <taxon>Dictyostelia</taxon>
        <taxon>Dictyosteliales</taxon>
        <taxon>Dictyosteliaceae</taxon>
        <taxon>Dictyostelium</taxon>
    </lineage>
</organism>
<dbReference type="EMBL" id="AAFI02000044">
    <property type="protein sequence ID" value="EAL66452.1"/>
    <property type="molecule type" value="Genomic_DNA"/>
</dbReference>
<dbReference type="RefSeq" id="XP_640442.1">
    <property type="nucleotide sequence ID" value="XM_635350.1"/>
</dbReference>
<dbReference type="FunCoup" id="Q54T09">
    <property type="interactions" value="877"/>
</dbReference>
<dbReference type="GlyGen" id="Q54T09">
    <property type="glycosylation" value="5 sites"/>
</dbReference>
<dbReference type="PaxDb" id="44689-DDB0205126"/>
<dbReference type="EnsemblProtists" id="EAL66452">
    <property type="protein sequence ID" value="EAL66452"/>
    <property type="gene ID" value="DDB_G0282061"/>
</dbReference>
<dbReference type="GeneID" id="8623401"/>
<dbReference type="KEGG" id="ddi:DDB_G0282061"/>
<dbReference type="dictyBase" id="DDB_G0282061"/>
<dbReference type="VEuPathDB" id="AmoebaDB:DDB_G0282061"/>
<dbReference type="eggNOG" id="ENOG502RHUB">
    <property type="taxonomic scope" value="Eukaryota"/>
</dbReference>
<dbReference type="HOGENOM" id="CLU_925684_0_0_1"/>
<dbReference type="InParanoid" id="Q54T09"/>
<dbReference type="OMA" id="ANEQFYI"/>
<dbReference type="PRO" id="PR:Q54T09"/>
<dbReference type="Proteomes" id="UP000002195">
    <property type="component" value="Chromosome 3"/>
</dbReference>
<dbReference type="GO" id="GO:0016020">
    <property type="term" value="C:membrane"/>
    <property type="evidence" value="ECO:0007669"/>
    <property type="project" value="UniProtKB-SubCell"/>
</dbReference>
<sequence>MKFKNTLSIFKILIILFSFYNVAFSDDTEKYTFKGTFGTSALTNSKTNSVKGSADLIIARVDGGYKFSYSISLTGIDGTDVSQVKLLGPSAPNTDGGQLKLTLPFDSSTVLTSTKFVGGGSQAVAPNSPTSFYIGQTLIDITSEKSNYANEQFYITVATFTEGAQQPVSRSQLLYTGSSNTPNSGGGTNPNGSSDVPPTVGPISSSDSTNSNSSSTDTASSSPSSSPSSSPSPNDSEESDNDSLQTDSTVLNPGGVETSTAGSSTGTTSSTTGSKDSSTGNSILPTLIIVTFFVLTLVIMS</sequence>
<protein>
    <recommendedName>
        <fullName>Uncharacterized transmembrane protein DDB_G0282061</fullName>
    </recommendedName>
</protein>
<comment type="subcellular location">
    <subcellularLocation>
        <location evidence="3">Membrane</location>
        <topology evidence="3">Single-pass type I membrane protein</topology>
    </subcellularLocation>
</comment>
<proteinExistence type="inferred from homology"/>
<accession>Q54T09</accession>
<name>Y5126_DICDI</name>
<evidence type="ECO:0000255" key="1"/>
<evidence type="ECO:0000256" key="2">
    <source>
        <dbReference type="SAM" id="MobiDB-lite"/>
    </source>
</evidence>
<evidence type="ECO:0000305" key="3"/>
<keyword id="KW-0325">Glycoprotein</keyword>
<keyword id="KW-0472">Membrane</keyword>
<keyword id="KW-1185">Reference proteome</keyword>
<keyword id="KW-0732">Signal</keyword>
<keyword id="KW-0812">Transmembrane</keyword>
<keyword id="KW-1133">Transmembrane helix</keyword>
<gene>
    <name type="ORF">DDB_G0282061</name>
</gene>